<comment type="function">
    <text evidence="1">Involved in protein export. Acts as a chaperone by maintaining the newly synthesized protein in an open conformation. Functions as a peptidyl-prolyl cis-trans isomerase.</text>
</comment>
<comment type="catalytic activity">
    <reaction evidence="1">
        <text>[protein]-peptidylproline (omega=180) = [protein]-peptidylproline (omega=0)</text>
        <dbReference type="Rhea" id="RHEA:16237"/>
        <dbReference type="Rhea" id="RHEA-COMP:10747"/>
        <dbReference type="Rhea" id="RHEA-COMP:10748"/>
        <dbReference type="ChEBI" id="CHEBI:83833"/>
        <dbReference type="ChEBI" id="CHEBI:83834"/>
        <dbReference type="EC" id="5.2.1.8"/>
    </reaction>
</comment>
<comment type="subcellular location">
    <subcellularLocation>
        <location>Cytoplasm</location>
    </subcellularLocation>
    <text evidence="1">About half TF is bound to the ribosome near the polypeptide exit tunnel while the other half is free in the cytoplasm.</text>
</comment>
<comment type="domain">
    <text evidence="1">Consists of 3 domains; the N-terminus binds the ribosome, the middle domain has PPIase activity, while the C-terminus has intrinsic chaperone activity on its own.</text>
</comment>
<comment type="similarity">
    <text evidence="1">Belongs to the FKBP-type PPIase family. Tig subfamily.</text>
</comment>
<feature type="chain" id="PRO_1000119510" description="Trigger factor">
    <location>
        <begin position="1"/>
        <end position="425"/>
    </location>
</feature>
<feature type="domain" description="PPIase FKBP-type" evidence="1">
    <location>
        <begin position="163"/>
        <end position="248"/>
    </location>
</feature>
<name>TIG_BACC4</name>
<gene>
    <name evidence="1" type="primary">tig</name>
    <name type="ordered locus">BCB4264_A4591</name>
</gene>
<dbReference type="EC" id="5.2.1.8" evidence="1"/>
<dbReference type="EMBL" id="CP001176">
    <property type="protein sequence ID" value="ACK62195.1"/>
    <property type="molecule type" value="Genomic_DNA"/>
</dbReference>
<dbReference type="RefSeq" id="WP_000105215.1">
    <property type="nucleotide sequence ID" value="NZ_VEHB01000006.1"/>
</dbReference>
<dbReference type="SMR" id="B7HEA5"/>
<dbReference type="GeneID" id="72451149"/>
<dbReference type="KEGG" id="bcb:BCB4264_A4591"/>
<dbReference type="HOGENOM" id="CLU_033058_3_2_9"/>
<dbReference type="Proteomes" id="UP000007096">
    <property type="component" value="Chromosome"/>
</dbReference>
<dbReference type="GO" id="GO:0005737">
    <property type="term" value="C:cytoplasm"/>
    <property type="evidence" value="ECO:0007669"/>
    <property type="project" value="UniProtKB-SubCell"/>
</dbReference>
<dbReference type="GO" id="GO:0003755">
    <property type="term" value="F:peptidyl-prolyl cis-trans isomerase activity"/>
    <property type="evidence" value="ECO:0007669"/>
    <property type="project" value="UniProtKB-UniRule"/>
</dbReference>
<dbReference type="GO" id="GO:0044183">
    <property type="term" value="F:protein folding chaperone"/>
    <property type="evidence" value="ECO:0007669"/>
    <property type="project" value="TreeGrafter"/>
</dbReference>
<dbReference type="GO" id="GO:0043022">
    <property type="term" value="F:ribosome binding"/>
    <property type="evidence" value="ECO:0007669"/>
    <property type="project" value="TreeGrafter"/>
</dbReference>
<dbReference type="GO" id="GO:0051083">
    <property type="term" value="P:'de novo' cotranslational protein folding"/>
    <property type="evidence" value="ECO:0007669"/>
    <property type="project" value="TreeGrafter"/>
</dbReference>
<dbReference type="GO" id="GO:0051301">
    <property type="term" value="P:cell division"/>
    <property type="evidence" value="ECO:0007669"/>
    <property type="project" value="UniProtKB-KW"/>
</dbReference>
<dbReference type="GO" id="GO:0061077">
    <property type="term" value="P:chaperone-mediated protein folding"/>
    <property type="evidence" value="ECO:0007669"/>
    <property type="project" value="TreeGrafter"/>
</dbReference>
<dbReference type="GO" id="GO:0015031">
    <property type="term" value="P:protein transport"/>
    <property type="evidence" value="ECO:0007669"/>
    <property type="project" value="UniProtKB-UniRule"/>
</dbReference>
<dbReference type="GO" id="GO:0043335">
    <property type="term" value="P:protein unfolding"/>
    <property type="evidence" value="ECO:0007669"/>
    <property type="project" value="TreeGrafter"/>
</dbReference>
<dbReference type="FunFam" id="3.10.50.40:FF:000001">
    <property type="entry name" value="Trigger factor"/>
    <property type="match status" value="1"/>
</dbReference>
<dbReference type="FunFam" id="3.30.70.1050:FF:000002">
    <property type="entry name" value="Trigger factor"/>
    <property type="match status" value="1"/>
</dbReference>
<dbReference type="Gene3D" id="3.10.50.40">
    <property type="match status" value="1"/>
</dbReference>
<dbReference type="Gene3D" id="3.30.70.1050">
    <property type="entry name" value="Trigger factor ribosome-binding domain"/>
    <property type="match status" value="1"/>
</dbReference>
<dbReference type="Gene3D" id="1.10.3120.10">
    <property type="entry name" value="Trigger factor, C-terminal domain"/>
    <property type="match status" value="1"/>
</dbReference>
<dbReference type="HAMAP" id="MF_00303">
    <property type="entry name" value="Trigger_factor_Tig"/>
    <property type="match status" value="1"/>
</dbReference>
<dbReference type="InterPro" id="IPR046357">
    <property type="entry name" value="PPIase_dom_sf"/>
</dbReference>
<dbReference type="InterPro" id="IPR001179">
    <property type="entry name" value="PPIase_FKBP_dom"/>
</dbReference>
<dbReference type="InterPro" id="IPR005215">
    <property type="entry name" value="Trig_fac"/>
</dbReference>
<dbReference type="InterPro" id="IPR008880">
    <property type="entry name" value="Trigger_fac_C"/>
</dbReference>
<dbReference type="InterPro" id="IPR037041">
    <property type="entry name" value="Trigger_fac_C_sf"/>
</dbReference>
<dbReference type="InterPro" id="IPR008881">
    <property type="entry name" value="Trigger_fac_ribosome-bd_bac"/>
</dbReference>
<dbReference type="InterPro" id="IPR036611">
    <property type="entry name" value="Trigger_fac_ribosome-bd_sf"/>
</dbReference>
<dbReference type="InterPro" id="IPR027304">
    <property type="entry name" value="Trigger_fact/SurA_dom_sf"/>
</dbReference>
<dbReference type="NCBIfam" id="TIGR00115">
    <property type="entry name" value="tig"/>
    <property type="match status" value="1"/>
</dbReference>
<dbReference type="PANTHER" id="PTHR30560">
    <property type="entry name" value="TRIGGER FACTOR CHAPERONE AND PEPTIDYL-PROLYL CIS/TRANS ISOMERASE"/>
    <property type="match status" value="1"/>
</dbReference>
<dbReference type="PANTHER" id="PTHR30560:SF3">
    <property type="entry name" value="TRIGGER FACTOR-LIKE PROTEIN TIG, CHLOROPLASTIC"/>
    <property type="match status" value="1"/>
</dbReference>
<dbReference type="Pfam" id="PF00254">
    <property type="entry name" value="FKBP_C"/>
    <property type="match status" value="1"/>
</dbReference>
<dbReference type="Pfam" id="PF05698">
    <property type="entry name" value="Trigger_C"/>
    <property type="match status" value="1"/>
</dbReference>
<dbReference type="Pfam" id="PF05697">
    <property type="entry name" value="Trigger_N"/>
    <property type="match status" value="1"/>
</dbReference>
<dbReference type="PIRSF" id="PIRSF003095">
    <property type="entry name" value="Trigger_factor"/>
    <property type="match status" value="1"/>
</dbReference>
<dbReference type="SUPFAM" id="SSF54534">
    <property type="entry name" value="FKBP-like"/>
    <property type="match status" value="1"/>
</dbReference>
<dbReference type="SUPFAM" id="SSF109998">
    <property type="entry name" value="Triger factor/SurA peptide-binding domain-like"/>
    <property type="match status" value="1"/>
</dbReference>
<dbReference type="SUPFAM" id="SSF102735">
    <property type="entry name" value="Trigger factor ribosome-binding domain"/>
    <property type="match status" value="1"/>
</dbReference>
<dbReference type="PROSITE" id="PS50059">
    <property type="entry name" value="FKBP_PPIASE"/>
    <property type="match status" value="1"/>
</dbReference>
<sequence length="425" mass="47345">MSTKWEKLEGNVGVLTIEVDAKEVNNSIDAAFKKVVKTINVPGFRKGKMPRPLFEQRFGIESLYQDALDIILPKAYGEAIEEAGIFPVDHPEIDIEKFEKNANLIFTAKVTVKPEVKLGEYKGLAVEKVETTVTDEDVENELKSLQERQAELVVKEEGTVENGDTAVIDFEGFVDGEAFEGGKGENYSLAIGSGTFIPGFEEQVIGLKSGESKDVEVSFPEEYHAAELAGKPATFKVTIHEIKTKELPELNDEFAKEADEAVATLDELKAKLRTNLEEGKKHEAEHKVRDEVVELAAANAEIEIPEAMINTELDRMVREFEQRLSQQGMNLELYYQFTGTDADKLKEQMKEDAQKRVRINLVLEAIIEAENIEVTEEEVTAEVEKMAEMYGMPVDAIKQALGSVDALAEDLKVRKAVDFLVENAA</sequence>
<keyword id="KW-0131">Cell cycle</keyword>
<keyword id="KW-0132">Cell division</keyword>
<keyword id="KW-0143">Chaperone</keyword>
<keyword id="KW-0963">Cytoplasm</keyword>
<keyword id="KW-0413">Isomerase</keyword>
<keyword id="KW-0697">Rotamase</keyword>
<reference key="1">
    <citation type="submission" date="2008-10" db="EMBL/GenBank/DDBJ databases">
        <title>Genome sequence of Bacillus cereus B4264.</title>
        <authorList>
            <person name="Dodson R.J."/>
            <person name="Durkin A.S."/>
            <person name="Rosovitz M.J."/>
            <person name="Rasko D.A."/>
            <person name="Hoffmaster A."/>
            <person name="Ravel J."/>
            <person name="Sutton G."/>
        </authorList>
    </citation>
    <scope>NUCLEOTIDE SEQUENCE [LARGE SCALE GENOMIC DNA]</scope>
    <source>
        <strain>B4264</strain>
    </source>
</reference>
<evidence type="ECO:0000255" key="1">
    <source>
        <dbReference type="HAMAP-Rule" id="MF_00303"/>
    </source>
</evidence>
<organism>
    <name type="scientific">Bacillus cereus (strain B4264)</name>
    <dbReference type="NCBI Taxonomy" id="405532"/>
    <lineage>
        <taxon>Bacteria</taxon>
        <taxon>Bacillati</taxon>
        <taxon>Bacillota</taxon>
        <taxon>Bacilli</taxon>
        <taxon>Bacillales</taxon>
        <taxon>Bacillaceae</taxon>
        <taxon>Bacillus</taxon>
        <taxon>Bacillus cereus group</taxon>
    </lineage>
</organism>
<protein>
    <recommendedName>
        <fullName evidence="1">Trigger factor</fullName>
        <shortName evidence="1">TF</shortName>
        <ecNumber evidence="1">5.2.1.8</ecNumber>
    </recommendedName>
    <alternativeName>
        <fullName evidence="1">PPIase</fullName>
    </alternativeName>
</protein>
<accession>B7HEA5</accession>
<proteinExistence type="inferred from homology"/>